<keyword id="KW-0002">3D-structure</keyword>
<keyword id="KW-0025">Alternative splicing</keyword>
<keyword id="KW-1003">Cell membrane</keyword>
<keyword id="KW-1015">Disulfide bond</keyword>
<keyword id="KW-0325">Glycoprotein</keyword>
<keyword id="KW-0336">GPI-anchor</keyword>
<keyword id="KW-0449">Lipoprotein</keyword>
<keyword id="KW-0472">Membrane</keyword>
<keyword id="KW-1267">Proteomics identification</keyword>
<keyword id="KW-1185">Reference proteome</keyword>
<keyword id="KW-0732">Signal</keyword>
<comment type="function">
    <text evidence="1">Believed to act as a modulator of nicotinic acetylcholine receptors (nAChRs) activity. In vitro increases receptor desensitization and decreases affinity for ACh of alpha-4:beta-2-containing nAChRs. May play a role in the intracellular trafficking of alpha-4:beta-2 and alpha-7-containing nAChRs and may inhibit their expression at the cell surface. May be involved in the control of anxiety.</text>
</comment>
<comment type="subunit">
    <text evidence="1">Interacts with CHRNA4 and nAChRs containing alpha-4:beta-2 (CHRNA4:CHRNB2) and alpha-7 (CHRNA7) subunits.</text>
</comment>
<comment type="interaction">
    <interactant intactId="EBI-18973558">
        <id>Q8N2G4-2</id>
    </interactant>
    <interactant intactId="EBI-3937430">
        <id>Q9NRY7</id>
        <label>PLSCR2</label>
    </interactant>
    <organismsDiffer>false</organismsDiffer>
    <experiments>3</experiments>
</comment>
<comment type="subcellular location">
    <subcellularLocation>
        <location evidence="6">Cell membrane</location>
        <topology evidence="6">Lipid-anchor</topology>
        <topology evidence="6">GPI-anchor</topology>
    </subcellularLocation>
</comment>
<comment type="alternative products">
    <event type="alternative splicing"/>
    <isoform>
        <id>Q8N2G4-1</id>
        <name>1</name>
        <sequence type="displayed"/>
    </isoform>
    <isoform>
        <id>Q8N2G4-2</id>
        <name>2</name>
        <sequence type="described" ref="VSP_021584"/>
    </isoform>
    <isoform>
        <id>Q8N2G4-3</id>
        <name>3</name>
        <sequence type="described" ref="VSP_021583"/>
    </isoform>
    <isoform>
        <id>Q8N2G4-4</id>
        <name>4</name>
        <sequence type="described" ref="VSP_046981"/>
    </isoform>
</comment>
<comment type="sequence caution" evidence="6">
    <conflict type="frameshift">
        <sequence resource="EMBL-CDS" id="BAC11647"/>
    </conflict>
</comment>
<accession>Q8N2G4</accession>
<accession>H7BXW6</accession>
<accession>Q6ZP52</accession>
<accession>Q6ZWI4</accession>
<accession>Q96AC2</accession>
<organism>
    <name type="scientific">Homo sapiens</name>
    <name type="common">Human</name>
    <dbReference type="NCBI Taxonomy" id="9606"/>
    <lineage>
        <taxon>Eukaryota</taxon>
        <taxon>Metazoa</taxon>
        <taxon>Chordata</taxon>
        <taxon>Craniata</taxon>
        <taxon>Vertebrata</taxon>
        <taxon>Euteleostomi</taxon>
        <taxon>Mammalia</taxon>
        <taxon>Eutheria</taxon>
        <taxon>Euarchontoglires</taxon>
        <taxon>Primates</taxon>
        <taxon>Haplorrhini</taxon>
        <taxon>Catarrhini</taxon>
        <taxon>Hominidae</taxon>
        <taxon>Homo</taxon>
    </lineage>
</organism>
<name>LYPD1_HUMAN</name>
<dbReference type="EMBL" id="AY358628">
    <property type="protein sequence ID" value="AAQ88991.1"/>
    <property type="molecule type" value="mRNA"/>
</dbReference>
<dbReference type="EMBL" id="AK094501">
    <property type="protein sequence ID" value="BAC04368.1"/>
    <property type="molecule type" value="mRNA"/>
</dbReference>
<dbReference type="EMBL" id="AK130005">
    <property type="protein sequence ID" value="BAC85273.1"/>
    <property type="molecule type" value="mRNA"/>
</dbReference>
<dbReference type="EMBL" id="AK123029">
    <property type="protein sequence ID" value="BAC85518.1"/>
    <property type="molecule type" value="mRNA"/>
</dbReference>
<dbReference type="EMBL" id="AK075487">
    <property type="protein sequence ID" value="BAC11647.1"/>
    <property type="status" value="ALT_FRAME"/>
    <property type="molecule type" value="mRNA"/>
</dbReference>
<dbReference type="EMBL" id="AC010974">
    <property type="status" value="NOT_ANNOTATED_CDS"/>
    <property type="molecule type" value="Genomic_DNA"/>
</dbReference>
<dbReference type="EMBL" id="AC079773">
    <property type="status" value="NOT_ANNOTATED_CDS"/>
    <property type="molecule type" value="Genomic_DNA"/>
</dbReference>
<dbReference type="EMBL" id="BC017318">
    <property type="protein sequence ID" value="AAH17318.1"/>
    <property type="molecule type" value="mRNA"/>
</dbReference>
<dbReference type="CCDS" id="CCDS42759.1">
    <molecule id="Q8N2G4-1"/>
</dbReference>
<dbReference type="CCDS" id="CCDS46416.1">
    <molecule id="Q8N2G4-4"/>
</dbReference>
<dbReference type="RefSeq" id="NP_001070895.1">
    <molecule id="Q8N2G4-4"/>
    <property type="nucleotide sequence ID" value="NM_001077427.4"/>
</dbReference>
<dbReference type="RefSeq" id="NP_001308163.1">
    <molecule id="Q8N2G4-3"/>
    <property type="nucleotide sequence ID" value="NM_001321234.2"/>
</dbReference>
<dbReference type="RefSeq" id="NP_001308164.1">
    <molecule id="Q8N2G4-4"/>
    <property type="nucleotide sequence ID" value="NM_001321235.2"/>
</dbReference>
<dbReference type="RefSeq" id="NP_653187.3">
    <molecule id="Q8N2G4-1"/>
    <property type="nucleotide sequence ID" value="NM_144586.6"/>
</dbReference>
<dbReference type="PDB" id="6ZSS">
    <property type="method" value="NMR"/>
    <property type="chains" value="A=22-107"/>
</dbReference>
<dbReference type="PDBsum" id="6ZSS"/>
<dbReference type="SMR" id="Q8N2G4"/>
<dbReference type="BioGRID" id="125502">
    <property type="interactions" value="70"/>
</dbReference>
<dbReference type="FunCoup" id="Q8N2G4">
    <property type="interactions" value="206"/>
</dbReference>
<dbReference type="IntAct" id="Q8N2G4">
    <property type="interactions" value="56"/>
</dbReference>
<dbReference type="STRING" id="9606.ENSP00000380605"/>
<dbReference type="GlyCosmos" id="Q8N2G4">
    <property type="glycosylation" value="1 site, No reported glycans"/>
</dbReference>
<dbReference type="GlyGen" id="Q8N2G4">
    <property type="glycosylation" value="1 site"/>
</dbReference>
<dbReference type="PhosphoSitePlus" id="Q8N2G4"/>
<dbReference type="BioMuta" id="LYPD1"/>
<dbReference type="DMDM" id="92058725"/>
<dbReference type="jPOST" id="Q8N2G4"/>
<dbReference type="MassIVE" id="Q8N2G4"/>
<dbReference type="PaxDb" id="9606-ENSP00000380605"/>
<dbReference type="PeptideAtlas" id="Q8N2G4"/>
<dbReference type="ProteomicsDB" id="43421"/>
<dbReference type="ProteomicsDB" id="71693">
    <molecule id="Q8N2G4-1"/>
</dbReference>
<dbReference type="ProteomicsDB" id="71694">
    <molecule id="Q8N2G4-2"/>
</dbReference>
<dbReference type="ProteomicsDB" id="71695">
    <molecule id="Q8N2G4-3"/>
</dbReference>
<dbReference type="Pumba" id="Q8N2G4"/>
<dbReference type="Antibodypedia" id="56153">
    <property type="antibodies" value="76 antibodies from 20 providers"/>
</dbReference>
<dbReference type="DNASU" id="116372"/>
<dbReference type="Ensembl" id="ENST00000345008.6">
    <molecule id="Q8N2G4-4"/>
    <property type="protein sequence ID" value="ENSP00000340563.6"/>
    <property type="gene ID" value="ENSG00000150551.11"/>
</dbReference>
<dbReference type="Ensembl" id="ENST00000397463.3">
    <molecule id="Q8N2G4-1"/>
    <property type="protein sequence ID" value="ENSP00000380605.2"/>
    <property type="gene ID" value="ENSG00000150551.11"/>
</dbReference>
<dbReference type="GeneID" id="116372"/>
<dbReference type="KEGG" id="hsa:116372"/>
<dbReference type="MANE-Select" id="ENST00000397463.3">
    <property type="protein sequence ID" value="ENSP00000380605.2"/>
    <property type="RefSeq nucleotide sequence ID" value="NM_144586.7"/>
    <property type="RefSeq protein sequence ID" value="NP_653187.3"/>
</dbReference>
<dbReference type="UCSC" id="uc002ttn.4">
    <molecule id="Q8N2G4-1"/>
    <property type="organism name" value="human"/>
</dbReference>
<dbReference type="AGR" id="HGNC:28431"/>
<dbReference type="CTD" id="116372"/>
<dbReference type="DisGeNET" id="116372"/>
<dbReference type="GeneCards" id="LYPD1"/>
<dbReference type="HGNC" id="HGNC:28431">
    <property type="gene designation" value="LYPD1"/>
</dbReference>
<dbReference type="HPA" id="ENSG00000150551">
    <property type="expression patterns" value="Group enriched (brain, fallopian tube, pituitary gland)"/>
</dbReference>
<dbReference type="MIM" id="610450">
    <property type="type" value="gene"/>
</dbReference>
<dbReference type="neXtProt" id="NX_Q8N2G4"/>
<dbReference type="OpenTargets" id="ENSG00000150551"/>
<dbReference type="PharmGKB" id="PA134862471"/>
<dbReference type="VEuPathDB" id="HostDB:ENSG00000150551"/>
<dbReference type="eggNOG" id="ENOG502S22T">
    <property type="taxonomic scope" value="Eukaryota"/>
</dbReference>
<dbReference type="GeneTree" id="ENSGT00390000002215"/>
<dbReference type="HOGENOM" id="CLU_152037_0_0_1"/>
<dbReference type="InParanoid" id="Q8N2G4"/>
<dbReference type="OMA" id="TFCGLFW"/>
<dbReference type="OrthoDB" id="9924997at2759"/>
<dbReference type="PAN-GO" id="Q8N2G4">
    <property type="GO annotations" value="2 GO annotations based on evolutionary models"/>
</dbReference>
<dbReference type="PhylomeDB" id="Q8N2G4"/>
<dbReference type="TreeFam" id="TF332325"/>
<dbReference type="PathwayCommons" id="Q8N2G4"/>
<dbReference type="Reactome" id="R-HSA-163125">
    <property type="pathway name" value="Post-translational modification: synthesis of GPI-anchored proteins"/>
</dbReference>
<dbReference type="SignaLink" id="Q8N2G4"/>
<dbReference type="BioGRID-ORCS" id="116372">
    <property type="hits" value="10 hits in 1137 CRISPR screens"/>
</dbReference>
<dbReference type="ChiTaRS" id="LYPD1">
    <property type="organism name" value="human"/>
</dbReference>
<dbReference type="GeneWiki" id="LYPD1"/>
<dbReference type="GenomeRNAi" id="116372"/>
<dbReference type="Pharos" id="Q8N2G4">
    <property type="development level" value="Tbio"/>
</dbReference>
<dbReference type="PRO" id="PR:Q8N2G4"/>
<dbReference type="Proteomes" id="UP000005640">
    <property type="component" value="Chromosome 2"/>
</dbReference>
<dbReference type="RNAct" id="Q8N2G4">
    <property type="molecule type" value="protein"/>
</dbReference>
<dbReference type="Bgee" id="ENSG00000150551">
    <property type="expression patterns" value="Expressed in right uterine tube and 122 other cell types or tissues"/>
</dbReference>
<dbReference type="ExpressionAtlas" id="Q8N2G4">
    <property type="expression patterns" value="baseline and differential"/>
</dbReference>
<dbReference type="GO" id="GO:0005576">
    <property type="term" value="C:extracellular region"/>
    <property type="evidence" value="ECO:0000304"/>
    <property type="project" value="Reactome"/>
</dbReference>
<dbReference type="GO" id="GO:0005886">
    <property type="term" value="C:plasma membrane"/>
    <property type="evidence" value="ECO:0000304"/>
    <property type="project" value="Reactome"/>
</dbReference>
<dbReference type="GO" id="GO:0098552">
    <property type="term" value="C:side of membrane"/>
    <property type="evidence" value="ECO:0007669"/>
    <property type="project" value="UniProtKB-KW"/>
</dbReference>
<dbReference type="GO" id="GO:0045202">
    <property type="term" value="C:synapse"/>
    <property type="evidence" value="ECO:0007669"/>
    <property type="project" value="GOC"/>
</dbReference>
<dbReference type="GO" id="GO:0033130">
    <property type="term" value="F:acetylcholine receptor binding"/>
    <property type="evidence" value="ECO:0007669"/>
    <property type="project" value="Ensembl"/>
</dbReference>
<dbReference type="GO" id="GO:0030550">
    <property type="term" value="F:acetylcholine receptor inhibitor activity"/>
    <property type="evidence" value="ECO:0000318"/>
    <property type="project" value="GO_Central"/>
</dbReference>
<dbReference type="GO" id="GO:0095500">
    <property type="term" value="P:acetylcholine receptor signaling pathway"/>
    <property type="evidence" value="ECO:0000318"/>
    <property type="project" value="GO_Central"/>
</dbReference>
<dbReference type="GO" id="GO:0001662">
    <property type="term" value="P:behavioral fear response"/>
    <property type="evidence" value="ECO:0007669"/>
    <property type="project" value="Ensembl"/>
</dbReference>
<dbReference type="GO" id="GO:1903077">
    <property type="term" value="P:negative regulation of protein localization to plasma membrane"/>
    <property type="evidence" value="ECO:0007669"/>
    <property type="project" value="Ensembl"/>
</dbReference>
<dbReference type="GO" id="GO:0072659">
    <property type="term" value="P:protein localization to plasma membrane"/>
    <property type="evidence" value="ECO:0007669"/>
    <property type="project" value="Ensembl"/>
</dbReference>
<dbReference type="GO" id="GO:0035094">
    <property type="term" value="P:response to nicotine"/>
    <property type="evidence" value="ECO:0007669"/>
    <property type="project" value="Ensembl"/>
</dbReference>
<dbReference type="GO" id="GO:0007271">
    <property type="term" value="P:synaptic transmission, cholinergic"/>
    <property type="evidence" value="ECO:0007669"/>
    <property type="project" value="Ensembl"/>
</dbReference>
<dbReference type="CDD" id="cd23559">
    <property type="entry name" value="TFP_LU_ECD_LYPD1"/>
    <property type="match status" value="1"/>
</dbReference>
<dbReference type="InterPro" id="IPR016054">
    <property type="entry name" value="LY6_UPA_recep-like"/>
</dbReference>
<dbReference type="InterPro" id="IPR045860">
    <property type="entry name" value="Snake_toxin-like_sf"/>
</dbReference>
<dbReference type="PANTHER" id="PTHR10036">
    <property type="entry name" value="CD59 GLYCOPROTEIN"/>
    <property type="match status" value="1"/>
</dbReference>
<dbReference type="PANTHER" id="PTHR10036:SF7">
    <property type="entry name" value="LY6_PLAUR DOMAIN-CONTAINING PROTEIN 1"/>
    <property type="match status" value="1"/>
</dbReference>
<dbReference type="Pfam" id="PF00021">
    <property type="entry name" value="UPAR_LY6"/>
    <property type="match status" value="1"/>
</dbReference>
<dbReference type="SUPFAM" id="SSF57302">
    <property type="entry name" value="Snake toxin-like"/>
    <property type="match status" value="1"/>
</dbReference>
<feature type="signal peptide" evidence="2">
    <location>
        <begin position="1"/>
        <end position="20"/>
    </location>
</feature>
<feature type="chain" id="PRO_0000226741" description="Ly6/PLAUR domain-containing protein 1">
    <location>
        <begin position="21"/>
        <end position="117"/>
    </location>
</feature>
<feature type="propeptide" id="PRO_0000226742" description="Removed in mature form" evidence="2">
    <location>
        <begin position="118"/>
        <end position="141"/>
    </location>
</feature>
<feature type="domain" description="UPAR/Ly6">
    <location>
        <begin position="25"/>
        <end position="107"/>
    </location>
</feature>
<feature type="lipid moiety-binding region" description="GPI-anchor amidated serine" evidence="2">
    <location>
        <position position="117"/>
    </location>
</feature>
<feature type="glycosylation site" description="N-linked (GlcNAc...) asparagine" evidence="2">
    <location>
        <position position="45"/>
    </location>
</feature>
<feature type="disulfide bond" evidence="3 7">
    <location>
        <begin position="25"/>
        <end position="54"/>
    </location>
</feature>
<feature type="disulfide bond" evidence="3 7">
    <location>
        <begin position="28"/>
        <end position="37"/>
    </location>
</feature>
<feature type="disulfide bond" evidence="3 7">
    <location>
        <begin position="46"/>
        <end position="71"/>
    </location>
</feature>
<feature type="disulfide bond" evidence="3 7">
    <location>
        <begin position="77"/>
        <end position="100"/>
    </location>
</feature>
<feature type="disulfide bond" evidence="3 7">
    <location>
        <begin position="88"/>
        <end position="97"/>
    </location>
</feature>
<feature type="disulfide bond" evidence="3 7">
    <location>
        <begin position="101"/>
        <end position="106"/>
    </location>
</feature>
<feature type="splice variant" id="VSP_046981" description="In isoform 4." evidence="6">
    <location>
        <begin position="1"/>
        <end position="52"/>
    </location>
</feature>
<feature type="splice variant" id="VSP_021583" description="In isoform 3." evidence="4">
    <original>MWVLG</original>
    <variation>MQAPRAAPAAPLSYDRRLRGS</variation>
    <location>
        <begin position="1"/>
        <end position="5"/>
    </location>
</feature>
<feature type="splice variant" id="VSP_021584" description="In isoform 2." evidence="4">
    <original>M</original>
    <variation>MQAPRAAPAAPLSYDRRPRDSGRM</variation>
    <location>
        <position position="1"/>
    </location>
</feature>
<feature type="sequence conflict" description="In Ref. 2; BAC85518." evidence="6" ref="2">
    <original>N</original>
    <variation>S</variation>
    <location>
        <position position="107"/>
    </location>
</feature>
<feature type="sequence conflict" description="In Ref. 2; BAC85518." evidence="6" ref="2">
    <original>K</original>
    <variation>R</variation>
    <location>
        <position position="133"/>
    </location>
</feature>
<feature type="strand" evidence="8">
    <location>
        <begin position="33"/>
        <end position="35"/>
    </location>
</feature>
<feature type="strand" evidence="8">
    <location>
        <begin position="42"/>
        <end position="44"/>
    </location>
</feature>
<feature type="strand" evidence="8">
    <location>
        <begin position="48"/>
        <end position="60"/>
    </location>
</feature>
<feature type="strand" evidence="8">
    <location>
        <begin position="65"/>
        <end position="73"/>
    </location>
</feature>
<feature type="helix" evidence="8">
    <location>
        <begin position="74"/>
        <end position="82"/>
    </location>
</feature>
<feature type="strand" evidence="8">
    <location>
        <begin position="97"/>
        <end position="103"/>
    </location>
</feature>
<proteinExistence type="evidence at protein level"/>
<reference key="1">
    <citation type="journal article" date="2003" name="Genome Res.">
        <title>The secreted protein discovery initiative (SPDI), a large-scale effort to identify novel human secreted and transmembrane proteins: a bioinformatics assessment.</title>
        <authorList>
            <person name="Clark H.F."/>
            <person name="Gurney A.L."/>
            <person name="Abaya E."/>
            <person name="Baker K."/>
            <person name="Baldwin D.T."/>
            <person name="Brush J."/>
            <person name="Chen J."/>
            <person name="Chow B."/>
            <person name="Chui C."/>
            <person name="Crowley C."/>
            <person name="Currell B."/>
            <person name="Deuel B."/>
            <person name="Dowd P."/>
            <person name="Eaton D."/>
            <person name="Foster J.S."/>
            <person name="Grimaldi C."/>
            <person name="Gu Q."/>
            <person name="Hass P.E."/>
            <person name="Heldens S."/>
            <person name="Huang A."/>
            <person name="Kim H.S."/>
            <person name="Klimowski L."/>
            <person name="Jin Y."/>
            <person name="Johnson S."/>
            <person name="Lee J."/>
            <person name="Lewis L."/>
            <person name="Liao D."/>
            <person name="Mark M.R."/>
            <person name="Robbie E."/>
            <person name="Sanchez C."/>
            <person name="Schoenfeld J."/>
            <person name="Seshagiri S."/>
            <person name="Simmons L."/>
            <person name="Singh J."/>
            <person name="Smith V."/>
            <person name="Stinson J."/>
            <person name="Vagts A."/>
            <person name="Vandlen R.L."/>
            <person name="Watanabe C."/>
            <person name="Wieand D."/>
            <person name="Woods K."/>
            <person name="Xie M.-H."/>
            <person name="Yansura D.G."/>
            <person name="Yi S."/>
            <person name="Yu G."/>
            <person name="Yuan J."/>
            <person name="Zhang M."/>
            <person name="Zhang Z."/>
            <person name="Goddard A.D."/>
            <person name="Wood W.I."/>
            <person name="Godowski P.J."/>
            <person name="Gray A.M."/>
        </authorList>
    </citation>
    <scope>NUCLEOTIDE SEQUENCE [LARGE SCALE MRNA] (ISOFORM 1)</scope>
    <source>
        <tissue>Ovary</tissue>
    </source>
</reference>
<reference key="2">
    <citation type="journal article" date="2004" name="Nat. Genet.">
        <title>Complete sequencing and characterization of 21,243 full-length human cDNAs.</title>
        <authorList>
            <person name="Ota T."/>
            <person name="Suzuki Y."/>
            <person name="Nishikawa T."/>
            <person name="Otsuki T."/>
            <person name="Sugiyama T."/>
            <person name="Irie R."/>
            <person name="Wakamatsu A."/>
            <person name="Hayashi K."/>
            <person name="Sato H."/>
            <person name="Nagai K."/>
            <person name="Kimura K."/>
            <person name="Makita H."/>
            <person name="Sekine M."/>
            <person name="Obayashi M."/>
            <person name="Nishi T."/>
            <person name="Shibahara T."/>
            <person name="Tanaka T."/>
            <person name="Ishii S."/>
            <person name="Yamamoto J."/>
            <person name="Saito K."/>
            <person name="Kawai Y."/>
            <person name="Isono Y."/>
            <person name="Nakamura Y."/>
            <person name="Nagahari K."/>
            <person name="Murakami K."/>
            <person name="Yasuda T."/>
            <person name="Iwayanagi T."/>
            <person name="Wagatsuma M."/>
            <person name="Shiratori A."/>
            <person name="Sudo H."/>
            <person name="Hosoiri T."/>
            <person name="Kaku Y."/>
            <person name="Kodaira H."/>
            <person name="Kondo H."/>
            <person name="Sugawara M."/>
            <person name="Takahashi M."/>
            <person name="Kanda K."/>
            <person name="Yokoi T."/>
            <person name="Furuya T."/>
            <person name="Kikkawa E."/>
            <person name="Omura Y."/>
            <person name="Abe K."/>
            <person name="Kamihara K."/>
            <person name="Katsuta N."/>
            <person name="Sato K."/>
            <person name="Tanikawa M."/>
            <person name="Yamazaki M."/>
            <person name="Ninomiya K."/>
            <person name="Ishibashi T."/>
            <person name="Yamashita H."/>
            <person name="Murakawa K."/>
            <person name="Fujimori K."/>
            <person name="Tanai H."/>
            <person name="Kimata M."/>
            <person name="Watanabe M."/>
            <person name="Hiraoka S."/>
            <person name="Chiba Y."/>
            <person name="Ishida S."/>
            <person name="Ono Y."/>
            <person name="Takiguchi S."/>
            <person name="Watanabe S."/>
            <person name="Yosida M."/>
            <person name="Hotuta T."/>
            <person name="Kusano J."/>
            <person name="Kanehori K."/>
            <person name="Takahashi-Fujii A."/>
            <person name="Hara H."/>
            <person name="Tanase T.-O."/>
            <person name="Nomura Y."/>
            <person name="Togiya S."/>
            <person name="Komai F."/>
            <person name="Hara R."/>
            <person name="Takeuchi K."/>
            <person name="Arita M."/>
            <person name="Imose N."/>
            <person name="Musashino K."/>
            <person name="Yuuki H."/>
            <person name="Oshima A."/>
            <person name="Sasaki N."/>
            <person name="Aotsuka S."/>
            <person name="Yoshikawa Y."/>
            <person name="Matsunawa H."/>
            <person name="Ichihara T."/>
            <person name="Shiohata N."/>
            <person name="Sano S."/>
            <person name="Moriya S."/>
            <person name="Momiyama H."/>
            <person name="Satoh N."/>
            <person name="Takami S."/>
            <person name="Terashima Y."/>
            <person name="Suzuki O."/>
            <person name="Nakagawa S."/>
            <person name="Senoh A."/>
            <person name="Mizoguchi H."/>
            <person name="Goto Y."/>
            <person name="Shimizu F."/>
            <person name="Wakebe H."/>
            <person name="Hishigaki H."/>
            <person name="Watanabe T."/>
            <person name="Sugiyama A."/>
            <person name="Takemoto M."/>
            <person name="Kawakami B."/>
            <person name="Yamazaki M."/>
            <person name="Watanabe K."/>
            <person name="Kumagai A."/>
            <person name="Itakura S."/>
            <person name="Fukuzumi Y."/>
            <person name="Fujimori Y."/>
            <person name="Komiyama M."/>
            <person name="Tashiro H."/>
            <person name="Tanigami A."/>
            <person name="Fujiwara T."/>
            <person name="Ono T."/>
            <person name="Yamada K."/>
            <person name="Fujii Y."/>
            <person name="Ozaki K."/>
            <person name="Hirao M."/>
            <person name="Ohmori Y."/>
            <person name="Kawabata A."/>
            <person name="Hikiji T."/>
            <person name="Kobatake N."/>
            <person name="Inagaki H."/>
            <person name="Ikema Y."/>
            <person name="Okamoto S."/>
            <person name="Okitani R."/>
            <person name="Kawakami T."/>
            <person name="Noguchi S."/>
            <person name="Itoh T."/>
            <person name="Shigeta K."/>
            <person name="Senba T."/>
            <person name="Matsumura K."/>
            <person name="Nakajima Y."/>
            <person name="Mizuno T."/>
            <person name="Morinaga M."/>
            <person name="Sasaki M."/>
            <person name="Togashi T."/>
            <person name="Oyama M."/>
            <person name="Hata H."/>
            <person name="Watanabe M."/>
            <person name="Komatsu T."/>
            <person name="Mizushima-Sugano J."/>
            <person name="Satoh T."/>
            <person name="Shirai Y."/>
            <person name="Takahashi Y."/>
            <person name="Nakagawa K."/>
            <person name="Okumura K."/>
            <person name="Nagase T."/>
            <person name="Nomura N."/>
            <person name="Kikuchi H."/>
            <person name="Masuho Y."/>
            <person name="Yamashita R."/>
            <person name="Nakai K."/>
            <person name="Yada T."/>
            <person name="Nakamura Y."/>
            <person name="Ohara O."/>
            <person name="Isogai T."/>
            <person name="Sugano S."/>
        </authorList>
    </citation>
    <scope>NUCLEOTIDE SEQUENCE [LARGE SCALE MRNA] (ISOFORMS 1; 2 AND 3)</scope>
    <source>
        <tissue>Brain cortex</tissue>
        <tissue>Fetal brain</tissue>
        <tissue>Kidney</tissue>
    </source>
</reference>
<reference key="3">
    <citation type="journal article" date="2005" name="DNA Res.">
        <title>Signal sequence and keyword trap in silico for selection of full-length human cDNAs encoding secretion or membrane proteins from oligo-capped cDNA libraries.</title>
        <authorList>
            <person name="Otsuki T."/>
            <person name="Ota T."/>
            <person name="Nishikawa T."/>
            <person name="Hayashi K."/>
            <person name="Suzuki Y."/>
            <person name="Yamamoto J."/>
            <person name="Wakamatsu A."/>
            <person name="Kimura K."/>
            <person name="Sakamoto K."/>
            <person name="Hatano N."/>
            <person name="Kawai Y."/>
            <person name="Ishii S."/>
            <person name="Saito K."/>
            <person name="Kojima S."/>
            <person name="Sugiyama T."/>
            <person name="Ono T."/>
            <person name="Okano K."/>
            <person name="Yoshikawa Y."/>
            <person name="Aotsuka S."/>
            <person name="Sasaki N."/>
            <person name="Hattori A."/>
            <person name="Okumura K."/>
            <person name="Nagai K."/>
            <person name="Sugano S."/>
            <person name="Isogai T."/>
        </authorList>
    </citation>
    <scope>NUCLEOTIDE SEQUENCE [LARGE SCALE MRNA] (ISOFORM 1)</scope>
    <source>
        <tissue>Ovary tumor</tissue>
    </source>
</reference>
<reference key="4">
    <citation type="journal article" date="2005" name="Nature">
        <title>Generation and annotation of the DNA sequences of human chromosomes 2 and 4.</title>
        <authorList>
            <person name="Hillier L.W."/>
            <person name="Graves T.A."/>
            <person name="Fulton R.S."/>
            <person name="Fulton L.A."/>
            <person name="Pepin K.H."/>
            <person name="Minx P."/>
            <person name="Wagner-McPherson C."/>
            <person name="Layman D."/>
            <person name="Wylie K."/>
            <person name="Sekhon M."/>
            <person name="Becker M.C."/>
            <person name="Fewell G.A."/>
            <person name="Delehaunty K.D."/>
            <person name="Miner T.L."/>
            <person name="Nash W.E."/>
            <person name="Kremitzki C."/>
            <person name="Oddy L."/>
            <person name="Du H."/>
            <person name="Sun H."/>
            <person name="Bradshaw-Cordum H."/>
            <person name="Ali J."/>
            <person name="Carter J."/>
            <person name="Cordes M."/>
            <person name="Harris A."/>
            <person name="Isak A."/>
            <person name="van Brunt A."/>
            <person name="Nguyen C."/>
            <person name="Du F."/>
            <person name="Courtney L."/>
            <person name="Kalicki J."/>
            <person name="Ozersky P."/>
            <person name="Abbott S."/>
            <person name="Armstrong J."/>
            <person name="Belter E.A."/>
            <person name="Caruso L."/>
            <person name="Cedroni M."/>
            <person name="Cotton M."/>
            <person name="Davidson T."/>
            <person name="Desai A."/>
            <person name="Elliott G."/>
            <person name="Erb T."/>
            <person name="Fronick C."/>
            <person name="Gaige T."/>
            <person name="Haakenson W."/>
            <person name="Haglund K."/>
            <person name="Holmes A."/>
            <person name="Harkins R."/>
            <person name="Kim K."/>
            <person name="Kruchowski S.S."/>
            <person name="Strong C.M."/>
            <person name="Grewal N."/>
            <person name="Goyea E."/>
            <person name="Hou S."/>
            <person name="Levy A."/>
            <person name="Martinka S."/>
            <person name="Mead K."/>
            <person name="McLellan M.D."/>
            <person name="Meyer R."/>
            <person name="Randall-Maher J."/>
            <person name="Tomlinson C."/>
            <person name="Dauphin-Kohlberg S."/>
            <person name="Kozlowicz-Reilly A."/>
            <person name="Shah N."/>
            <person name="Swearengen-Shahid S."/>
            <person name="Snider J."/>
            <person name="Strong J.T."/>
            <person name="Thompson J."/>
            <person name="Yoakum M."/>
            <person name="Leonard S."/>
            <person name="Pearman C."/>
            <person name="Trani L."/>
            <person name="Radionenko M."/>
            <person name="Waligorski J.E."/>
            <person name="Wang C."/>
            <person name="Rock S.M."/>
            <person name="Tin-Wollam A.-M."/>
            <person name="Maupin R."/>
            <person name="Latreille P."/>
            <person name="Wendl M.C."/>
            <person name="Yang S.-P."/>
            <person name="Pohl C."/>
            <person name="Wallis J.W."/>
            <person name="Spieth J."/>
            <person name="Bieri T.A."/>
            <person name="Berkowicz N."/>
            <person name="Nelson J.O."/>
            <person name="Osborne J."/>
            <person name="Ding L."/>
            <person name="Meyer R."/>
            <person name="Sabo A."/>
            <person name="Shotland Y."/>
            <person name="Sinha P."/>
            <person name="Wohldmann P.E."/>
            <person name="Cook L.L."/>
            <person name="Hickenbotham M.T."/>
            <person name="Eldred J."/>
            <person name="Williams D."/>
            <person name="Jones T.A."/>
            <person name="She X."/>
            <person name="Ciccarelli F.D."/>
            <person name="Izaurralde E."/>
            <person name="Taylor J."/>
            <person name="Schmutz J."/>
            <person name="Myers R.M."/>
            <person name="Cox D.R."/>
            <person name="Huang X."/>
            <person name="McPherson J.D."/>
            <person name="Mardis E.R."/>
            <person name="Clifton S.W."/>
            <person name="Warren W.C."/>
            <person name="Chinwalla A.T."/>
            <person name="Eddy S.R."/>
            <person name="Marra M.A."/>
            <person name="Ovcharenko I."/>
            <person name="Furey T.S."/>
            <person name="Miller W."/>
            <person name="Eichler E.E."/>
            <person name="Bork P."/>
            <person name="Suyama M."/>
            <person name="Torrents D."/>
            <person name="Waterston R.H."/>
            <person name="Wilson R.K."/>
        </authorList>
    </citation>
    <scope>NUCLEOTIDE SEQUENCE [LARGE SCALE GENOMIC DNA]</scope>
</reference>
<reference key="5">
    <citation type="journal article" date="2004" name="Genome Res.">
        <title>The status, quality, and expansion of the NIH full-length cDNA project: the Mammalian Gene Collection (MGC).</title>
        <authorList>
            <consortium name="The MGC Project Team"/>
        </authorList>
    </citation>
    <scope>NUCLEOTIDE SEQUENCE [LARGE SCALE MRNA] (ISOFORM 1)</scope>
    <source>
        <tissue>Pancreas</tissue>
    </source>
</reference>
<reference evidence="7" key="6">
    <citation type="journal article" date="2020" name="Int. J. Mol. Sci.">
        <title>Structural Diversity and Dynamics of Human Three-Finger Proteins Acting on Nicotinic Acetylcholine Receptors.</title>
        <authorList>
            <person name="Paramonov A.S."/>
            <person name="Kocharovskaya M.V."/>
            <person name="Tsarev A.V."/>
            <person name="Kulbatskii D.S."/>
            <person name="Loktyushov E.V."/>
            <person name="Shulepko M.A."/>
            <person name="Kirpichnikov M.P."/>
            <person name="Lyukmanova E.N."/>
            <person name="Shenkarev Z.O."/>
        </authorList>
    </citation>
    <scope>STRUCTURE BY NMR OF 22-107</scope>
    <scope>DISULFIDE BONDS</scope>
</reference>
<evidence type="ECO:0000250" key="1">
    <source>
        <dbReference type="UniProtKB" id="Q8BLC3"/>
    </source>
</evidence>
<evidence type="ECO:0000255" key="2"/>
<evidence type="ECO:0000269" key="3">
    <source>
    </source>
</evidence>
<evidence type="ECO:0000303" key="4">
    <source>
    </source>
</evidence>
<evidence type="ECO:0000303" key="5">
    <source>
    </source>
</evidence>
<evidence type="ECO:0000305" key="6"/>
<evidence type="ECO:0007744" key="7">
    <source>
        <dbReference type="PDB" id="6ZSS"/>
    </source>
</evidence>
<evidence type="ECO:0007829" key="8">
    <source>
        <dbReference type="PDB" id="6ZSS"/>
    </source>
</evidence>
<protein>
    <recommendedName>
        <fullName>Ly6/PLAUR domain-containing protein 1</fullName>
    </recommendedName>
    <alternativeName>
        <fullName>Putative HeLa tumor suppressor</fullName>
        <shortName>PHTS</shortName>
    </alternativeName>
</protein>
<sequence length="141" mass="15240">MWVLGIAATFCGLFLLPGFALQIQCYQCEEFQLNNDCSSPEFIVNCTVNVQDMCQKEVMEQSAGIMYRKSCASSAACLIASAGYQSFCSPGKLNSVCISCCNTPLCNGPRPKKRGSSASALRPGLRTTILFLKLALFSAHC</sequence>
<gene>
    <name type="primary">LYPD1</name>
    <name evidence="5" type="synonym">Lynx2</name>
    <name type="synonym">LYPDC1</name>
    <name type="ORF">PSEC0181</name>
    <name type="ORF">UNQ3079/PRO9917</name>
</gene>